<gene>
    <name evidence="5" type="primary">MTA1</name>
    <name type="ORF">M406DRAFT_288717</name>
</gene>
<organism>
    <name type="scientific">Cryphonectria parasitica (strain ATCC 38755 / EP155)</name>
    <dbReference type="NCBI Taxonomy" id="660469"/>
    <lineage>
        <taxon>Eukaryota</taxon>
        <taxon>Fungi</taxon>
        <taxon>Dikarya</taxon>
        <taxon>Ascomycota</taxon>
        <taxon>Pezizomycotina</taxon>
        <taxon>Sordariomycetes</taxon>
        <taxon>Sordariomycetidae</taxon>
        <taxon>Diaporthales</taxon>
        <taxon>Cryphonectriaceae</taxon>
        <taxon>Cryphonectria-Endothia species complex</taxon>
        <taxon>Cryphonectria</taxon>
    </lineage>
</organism>
<evidence type="ECO:0000256" key="1">
    <source>
        <dbReference type="SAM" id="MobiDB-lite"/>
    </source>
</evidence>
<evidence type="ECO:0000269" key="2">
    <source>
    </source>
</evidence>
<evidence type="ECO:0000269" key="3">
    <source>
    </source>
</evidence>
<evidence type="ECO:0000269" key="4">
    <source>
    </source>
</evidence>
<evidence type="ECO:0000303" key="5">
    <source>
    </source>
</evidence>
<evidence type="ECO:0000305" key="6"/>
<accession>A0A9P5CQV5</accession>
<protein>
    <recommendedName>
        <fullName evidence="5">N6-methyladenosine RNA methyltransferase MTA1</fullName>
        <ecNumber evidence="3">2.1.1.348</ecNumber>
    </recommendedName>
    <alternativeName>
        <fullName evidence="5">M6A writer MTA1</fullName>
    </alternativeName>
</protein>
<comment type="function">
    <text evidence="3 4">N6-methyladenosine RNA methyltransferase that plays a crucial role in fungal phenotypic traits, virulence, and stress tolerance (PubMed:39159278, PubMed:39611846). Mediates the methylation of mRNAs to produce N6-methyladenosine (m6A)-containing mRNAs (PubMed:39159278, PubMed:39611846). M6A is a modification present at internal sites of mRNAs and some non-coding RNAs and plays a role in mRNA stability and processing (PubMed:39159278, PubMed:39611846). Mediates specifically acid phosphatase APHA mRNA stability through a YTHDF1-dependent m6A modification of the A1306, A1341, and A1666 key methylation modification sites (PubMed:39159278). Also mediates the stability of the transcription factor ZAP1 mRNA via modification of residue A1935 localized in the 3'UTR (PubMed:39611846).</text>
</comment>
<comment type="catalytic activity">
    <reaction evidence="3 4">
        <text>an adenosine in mRNA + S-adenosyl-L-methionine = an N(6)-methyladenosine in mRNA + S-adenosyl-L-homocysteine + H(+)</text>
        <dbReference type="Rhea" id="RHEA:55584"/>
        <dbReference type="Rhea" id="RHEA-COMP:12414"/>
        <dbReference type="Rhea" id="RHEA-COMP:12417"/>
        <dbReference type="ChEBI" id="CHEBI:15378"/>
        <dbReference type="ChEBI" id="CHEBI:57856"/>
        <dbReference type="ChEBI" id="CHEBI:59789"/>
        <dbReference type="ChEBI" id="CHEBI:74411"/>
        <dbReference type="ChEBI" id="CHEBI:74449"/>
        <dbReference type="EC" id="2.1.1.348"/>
    </reaction>
    <physiologicalReaction direction="left-to-right" evidence="3 4">
        <dbReference type="Rhea" id="RHEA:55585"/>
    </physiologicalReaction>
</comment>
<comment type="induction">
    <text evidence="2">Transcription level is decreased by CHV1 virus infection.</text>
</comment>
<comment type="disruption phenotype">
    <text evidence="3 4">Drastically lowers the m6A level of APHA mRNA and reduced its expression (PubMed:39159278). Significantly decreases the methylation level of the ZAP1 mRNA (PubMed:39611846). Exhibits a growth rate defect and displays an irregular colony margin (PubMed:39159278). Leads to a significant decrease in sporulation (PubMed:39159278). Also significantly reduces virulence on chestnut stems and red Fuji apples (PubMed:39159278). Displays more sensitivity to both oxidative stress, osmotic stress, or cell wall integrity stress (PubMed:39159278).</text>
</comment>
<comment type="similarity">
    <text evidence="6">Belongs to the MT-A70-like family.</text>
</comment>
<feature type="chain" id="PRO_0000462148" description="N6-methyladenosine RNA methyltransferase MTA1">
    <location>
        <begin position="1"/>
        <end position="336"/>
    </location>
</feature>
<feature type="region of interest" description="Disordered" evidence="1">
    <location>
        <begin position="61"/>
        <end position="83"/>
    </location>
</feature>
<feature type="mutagenesis site" description="Abolishes the catalytic activity; when associated with A-161." evidence="3">
    <original>D</original>
    <variation>A</variation>
    <location>
        <position position="158"/>
    </location>
</feature>
<feature type="mutagenesis site" description="Abolishes the catalytic activity; when associated with A-158." evidence="3">
    <original>W</original>
    <variation>A</variation>
    <location>
        <position position="161"/>
    </location>
</feature>
<reference key="1">
    <citation type="journal article" date="2020" name="Phytopathology">
        <title>Genome sequence of the chestnut blight fungus Cryphonectria parasitica EP155: A fundamental resource for an archetypical invasive plant pathogen.</title>
        <authorList>
            <person name="Crouch J.A."/>
            <person name="Dawe A."/>
            <person name="Aerts A."/>
            <person name="Barry K."/>
            <person name="Churchill A.C.L."/>
            <person name="Grimwood J."/>
            <person name="Hillman B."/>
            <person name="Milgroom M.G."/>
            <person name="Pangilinan J."/>
            <person name="Smith M."/>
            <person name="Salamov A."/>
            <person name="Schmutz J."/>
            <person name="Yadav J."/>
            <person name="Grigoriev I.V."/>
            <person name="Nuss D."/>
        </authorList>
    </citation>
    <scope>NUCLEOTIDE SEQUENCE [LARGE SCALE GENOMIC DNA]</scope>
    <source>
        <strain>ATCC 38755 / EP155</strain>
    </source>
</reference>
<reference key="2">
    <citation type="journal article" date="2018" name="Front. Microbiol.">
        <title>Comparative Methylome Analysis Reveals Perturbation of Host Epigenome in Chestnut Blight Fungus by a Hypovirus.</title>
        <authorList>
            <person name="Li R."/>
            <person name="Zhou S."/>
            <person name="Li Y."/>
            <person name="Shen X."/>
            <person name="Wang Z."/>
            <person name="Chen B."/>
        </authorList>
    </citation>
    <scope>INDUCTION</scope>
</reference>
<reference key="3">
    <citation type="journal article" date="2024" name="PLoS Pathog.">
        <title>N6-methyladenosine RNA methyltransferase CpMTA1 mediates CpAphA mRNA stability through a YTHDF1-dependent m6A modification in the chestnut blight fungus.</title>
        <authorList>
            <person name="Zhao L."/>
            <person name="Wei X."/>
            <person name="Chen F."/>
            <person name="Yuan L."/>
            <person name="Chen B."/>
            <person name="Li R."/>
        </authorList>
    </citation>
    <scope>FUNCTION</scope>
    <scope>CATALYTIC ACTIVITY</scope>
    <scope>DISRUPTION PHENOTYPE</scope>
</reference>
<reference key="4">
    <citation type="journal article" date="2025" name="MBio">
        <title>m6A demethylase CpALKBH regulates CpZap1 mRNA stability to modulate the development and virulence of chestnut blight fungus.</title>
        <authorList>
            <person name="Zhao L."/>
            <person name="Wei X."/>
            <person name="Chen F."/>
            <person name="Chen B."/>
            <person name="Li R."/>
        </authorList>
    </citation>
    <scope>FUNCTION</scope>
    <scope>CATALYTIC ACTIVITY</scope>
    <scope>DISRUPTION PHENOTYPE</scope>
    <scope>SUBCELLULAR LOCATION</scope>
    <scope>MUTAGENESIS OF ASP-158 AND TRP-161</scope>
</reference>
<keyword id="KW-0489">Methyltransferase</keyword>
<keyword id="KW-1185">Reference proteome</keyword>
<keyword id="KW-0694">RNA-binding</keyword>
<keyword id="KW-0949">S-adenosyl-L-methionine</keyword>
<keyword id="KW-0749">Sporulation</keyword>
<keyword id="KW-0808">Transferase</keyword>
<keyword id="KW-0843">Virulence</keyword>
<name>MTA1_CRYP1</name>
<sequence>MNGREHRRGDEAARREARSILFQNQDRSIVLIDVPTSIEEAQASPEEVGCDAGPLRKRRRLISSEPPHLPFKTPEPKAGSGGLTESVSDLMIAAAATEALRVLQESYAGPFCLPRVTRPNPLKSAFVPKGSFFLHGTVSSERDRFAAEAPVFDLIVLDPPWPNRSARRKQRNYRVADSLGSIRETLSLIPIAAHLAPDGLLAVWITNKAGVVELLTGPRGLFAQWGLEQVDEWTWLKITTSGEPIVDVGSTWRKPWERILIARRRGSSRKPACRGRVLVSVPDLHSRKPNLRGLFEDVLVPSNKGLEIFARNLTAGWWSWGDEVLKFQQPEYWVES</sequence>
<proteinExistence type="evidence at protein level"/>
<dbReference type="EC" id="2.1.1.348" evidence="3"/>
<dbReference type="EMBL" id="MU032346">
    <property type="protein sequence ID" value="KAF3767598.1"/>
    <property type="molecule type" value="Genomic_DNA"/>
</dbReference>
<dbReference type="Proteomes" id="UP000803844">
    <property type="component" value="Unassembled WGS sequence"/>
</dbReference>
<dbReference type="GO" id="GO:0005634">
    <property type="term" value="C:nucleus"/>
    <property type="evidence" value="ECO:0007669"/>
    <property type="project" value="TreeGrafter"/>
</dbReference>
<dbReference type="GO" id="GO:0008168">
    <property type="term" value="F:methyltransferase activity"/>
    <property type="evidence" value="ECO:0007669"/>
    <property type="project" value="InterPro"/>
</dbReference>
<dbReference type="GO" id="GO:0003676">
    <property type="term" value="F:nucleic acid binding"/>
    <property type="evidence" value="ECO:0007669"/>
    <property type="project" value="InterPro"/>
</dbReference>
<dbReference type="GO" id="GO:0032259">
    <property type="term" value="P:methylation"/>
    <property type="evidence" value="ECO:0007669"/>
    <property type="project" value="InterPro"/>
</dbReference>
<dbReference type="InterPro" id="IPR002052">
    <property type="entry name" value="DNA_methylase_N6_adenine_CS"/>
</dbReference>
<dbReference type="InterPro" id="IPR007757">
    <property type="entry name" value="MT-A70-like"/>
</dbReference>
<dbReference type="InterPro" id="IPR029063">
    <property type="entry name" value="SAM-dependent_MTases_sf"/>
</dbReference>
<dbReference type="PANTHER" id="PTHR12829:SF4">
    <property type="entry name" value="N(6)-ADENINE-SPECIFIC METHYLTRANSFERASE METTL4"/>
    <property type="match status" value="1"/>
</dbReference>
<dbReference type="PANTHER" id="PTHR12829">
    <property type="entry name" value="N6-ADENOSINE-METHYLTRANSFERASE"/>
    <property type="match status" value="1"/>
</dbReference>
<dbReference type="Pfam" id="PF05063">
    <property type="entry name" value="MT-A70"/>
    <property type="match status" value="1"/>
</dbReference>
<dbReference type="SUPFAM" id="SSF53335">
    <property type="entry name" value="S-adenosyl-L-methionine-dependent methyltransferases"/>
    <property type="match status" value="1"/>
</dbReference>
<dbReference type="PROSITE" id="PS51143">
    <property type="entry name" value="MT_A70"/>
    <property type="match status" value="1"/>
</dbReference>
<dbReference type="PROSITE" id="PS00092">
    <property type="entry name" value="N6_MTASE"/>
    <property type="match status" value="1"/>
</dbReference>